<gene>
    <name evidence="1" type="primary">groEL</name>
    <name evidence="1" type="synonym">groL</name>
    <name type="ordered locus">Daud_2007</name>
</gene>
<proteinExistence type="inferred from homology"/>
<accession>B1I661</accession>
<comment type="function">
    <text evidence="1">Together with its co-chaperonin GroES, plays an essential role in assisting protein folding. The GroEL-GroES system forms a nano-cage that allows encapsulation of the non-native substrate proteins and provides a physical environment optimized to promote and accelerate protein folding.</text>
</comment>
<comment type="catalytic activity">
    <reaction evidence="1">
        <text>ATP + H2O + a folded polypeptide = ADP + phosphate + an unfolded polypeptide.</text>
        <dbReference type="EC" id="5.6.1.7"/>
    </reaction>
</comment>
<comment type="subunit">
    <text evidence="1">Forms a cylinder of 14 subunits composed of two heptameric rings stacked back-to-back. Interacts with the co-chaperonin GroES.</text>
</comment>
<comment type="subcellular location">
    <subcellularLocation>
        <location evidence="1">Cytoplasm</location>
    </subcellularLocation>
</comment>
<comment type="similarity">
    <text evidence="1">Belongs to the chaperonin (HSP60) family.</text>
</comment>
<name>CH60_DESAP</name>
<dbReference type="EC" id="5.6.1.7" evidence="1"/>
<dbReference type="EMBL" id="CP000860">
    <property type="protein sequence ID" value="ACA60498.1"/>
    <property type="molecule type" value="Genomic_DNA"/>
</dbReference>
<dbReference type="RefSeq" id="WP_012303073.1">
    <property type="nucleotide sequence ID" value="NC_010424.1"/>
</dbReference>
<dbReference type="SMR" id="B1I661"/>
<dbReference type="STRING" id="477974.Daud_2007"/>
<dbReference type="KEGG" id="dau:Daud_2007"/>
<dbReference type="eggNOG" id="COG0459">
    <property type="taxonomic scope" value="Bacteria"/>
</dbReference>
<dbReference type="HOGENOM" id="CLU_016503_3_0_9"/>
<dbReference type="OrthoDB" id="9766614at2"/>
<dbReference type="Proteomes" id="UP000008544">
    <property type="component" value="Chromosome"/>
</dbReference>
<dbReference type="GO" id="GO:0005737">
    <property type="term" value="C:cytoplasm"/>
    <property type="evidence" value="ECO:0007669"/>
    <property type="project" value="UniProtKB-SubCell"/>
</dbReference>
<dbReference type="GO" id="GO:0005524">
    <property type="term" value="F:ATP binding"/>
    <property type="evidence" value="ECO:0007669"/>
    <property type="project" value="UniProtKB-UniRule"/>
</dbReference>
<dbReference type="GO" id="GO:0140662">
    <property type="term" value="F:ATP-dependent protein folding chaperone"/>
    <property type="evidence" value="ECO:0007669"/>
    <property type="project" value="InterPro"/>
</dbReference>
<dbReference type="GO" id="GO:0016853">
    <property type="term" value="F:isomerase activity"/>
    <property type="evidence" value="ECO:0007669"/>
    <property type="project" value="UniProtKB-KW"/>
</dbReference>
<dbReference type="GO" id="GO:0051082">
    <property type="term" value="F:unfolded protein binding"/>
    <property type="evidence" value="ECO:0007669"/>
    <property type="project" value="UniProtKB-UniRule"/>
</dbReference>
<dbReference type="GO" id="GO:0042026">
    <property type="term" value="P:protein refolding"/>
    <property type="evidence" value="ECO:0007669"/>
    <property type="project" value="UniProtKB-UniRule"/>
</dbReference>
<dbReference type="CDD" id="cd03344">
    <property type="entry name" value="GroEL"/>
    <property type="match status" value="1"/>
</dbReference>
<dbReference type="FunFam" id="3.50.7.10:FF:000001">
    <property type="entry name" value="60 kDa chaperonin"/>
    <property type="match status" value="1"/>
</dbReference>
<dbReference type="Gene3D" id="3.50.7.10">
    <property type="entry name" value="GroEL"/>
    <property type="match status" value="1"/>
</dbReference>
<dbReference type="Gene3D" id="1.10.560.10">
    <property type="entry name" value="GroEL-like equatorial domain"/>
    <property type="match status" value="1"/>
</dbReference>
<dbReference type="Gene3D" id="3.30.260.10">
    <property type="entry name" value="TCP-1-like chaperonin intermediate domain"/>
    <property type="match status" value="1"/>
</dbReference>
<dbReference type="HAMAP" id="MF_00600">
    <property type="entry name" value="CH60"/>
    <property type="match status" value="1"/>
</dbReference>
<dbReference type="InterPro" id="IPR018370">
    <property type="entry name" value="Chaperonin_Cpn60_CS"/>
</dbReference>
<dbReference type="InterPro" id="IPR001844">
    <property type="entry name" value="Cpn60/GroEL"/>
</dbReference>
<dbReference type="InterPro" id="IPR002423">
    <property type="entry name" value="Cpn60/GroEL/TCP-1"/>
</dbReference>
<dbReference type="InterPro" id="IPR027409">
    <property type="entry name" value="GroEL-like_apical_dom_sf"/>
</dbReference>
<dbReference type="InterPro" id="IPR027413">
    <property type="entry name" value="GROEL-like_equatorial_sf"/>
</dbReference>
<dbReference type="InterPro" id="IPR027410">
    <property type="entry name" value="TCP-1-like_intermed_sf"/>
</dbReference>
<dbReference type="NCBIfam" id="TIGR02348">
    <property type="entry name" value="GroEL"/>
    <property type="match status" value="1"/>
</dbReference>
<dbReference type="NCBIfam" id="NF000592">
    <property type="entry name" value="PRK00013.1"/>
    <property type="match status" value="1"/>
</dbReference>
<dbReference type="NCBIfam" id="NF009487">
    <property type="entry name" value="PRK12849.1"/>
    <property type="match status" value="1"/>
</dbReference>
<dbReference type="NCBIfam" id="NF009488">
    <property type="entry name" value="PRK12850.1"/>
    <property type="match status" value="1"/>
</dbReference>
<dbReference type="NCBIfam" id="NF009489">
    <property type="entry name" value="PRK12851.1"/>
    <property type="match status" value="1"/>
</dbReference>
<dbReference type="PANTHER" id="PTHR45633">
    <property type="entry name" value="60 KDA HEAT SHOCK PROTEIN, MITOCHONDRIAL"/>
    <property type="match status" value="1"/>
</dbReference>
<dbReference type="Pfam" id="PF00118">
    <property type="entry name" value="Cpn60_TCP1"/>
    <property type="match status" value="1"/>
</dbReference>
<dbReference type="PRINTS" id="PR00298">
    <property type="entry name" value="CHAPERONIN60"/>
</dbReference>
<dbReference type="SUPFAM" id="SSF52029">
    <property type="entry name" value="GroEL apical domain-like"/>
    <property type="match status" value="1"/>
</dbReference>
<dbReference type="SUPFAM" id="SSF48592">
    <property type="entry name" value="GroEL equatorial domain-like"/>
    <property type="match status" value="1"/>
</dbReference>
<dbReference type="SUPFAM" id="SSF54849">
    <property type="entry name" value="GroEL-intermediate domain like"/>
    <property type="match status" value="1"/>
</dbReference>
<dbReference type="PROSITE" id="PS00296">
    <property type="entry name" value="CHAPERONINS_CPN60"/>
    <property type="match status" value="1"/>
</dbReference>
<sequence length="547" mass="57848">MAAKDIVYREDARTAMERGVNALADAVRVTLGPKGRNVVLEKKFGSPMIVNDGVTIAREIELENPFENMGAQLVKEVATKTNDIAGDGTTTAAVLAQAIVRAGLKNVTAGANPMILKRGIEKAVERTVEEIKSRAKPVESKEAITQVASISANDTTIGNLIADAMEKVGKDGVITVEESKGMGTSLEVVDGMNFDRGYISPYMITDPDKMEATLADPYILITDKKISAVADILPILEKVLQAGKALLIIAEDVEGEALATLVVNKLRGTLNVVAVKAPGFGDRRKAMLEDIAILTGGRVVSEEVGLKLDKAGLDLLGKARQVRVKKDETIVVDGQGDADAITKRLAQIKKQIEDTTSDFDREKLQERLAKLAGGVAVINVGAATETEMKEKKLRIEDALNATRAAVEEGIVPGGGTVYVNVIPVLNGLEPELPDERTGVDIIKRALEAPLRQIANNAGVEGSIVVEKVKESPAGVGFDALSEQYTDMIGAGIVDPAKVTRIALQNAASIAAMILTTETLVAEKVDKDKKGGMGGMGGMGGMGGMDMM</sequence>
<feature type="chain" id="PRO_1000130001" description="Chaperonin GroEL">
    <location>
        <begin position="1"/>
        <end position="547"/>
    </location>
</feature>
<feature type="binding site" evidence="1">
    <location>
        <begin position="30"/>
        <end position="33"/>
    </location>
    <ligand>
        <name>ATP</name>
        <dbReference type="ChEBI" id="CHEBI:30616"/>
    </ligand>
</feature>
<feature type="binding site" evidence="1">
    <location>
        <begin position="87"/>
        <end position="91"/>
    </location>
    <ligand>
        <name>ATP</name>
        <dbReference type="ChEBI" id="CHEBI:30616"/>
    </ligand>
</feature>
<feature type="binding site" evidence="1">
    <location>
        <position position="414"/>
    </location>
    <ligand>
        <name>ATP</name>
        <dbReference type="ChEBI" id="CHEBI:30616"/>
    </ligand>
</feature>
<feature type="binding site" evidence="1">
    <location>
        <begin position="478"/>
        <end position="480"/>
    </location>
    <ligand>
        <name>ATP</name>
        <dbReference type="ChEBI" id="CHEBI:30616"/>
    </ligand>
</feature>
<feature type="binding site" evidence="1">
    <location>
        <position position="494"/>
    </location>
    <ligand>
        <name>ATP</name>
        <dbReference type="ChEBI" id="CHEBI:30616"/>
    </ligand>
</feature>
<reference key="1">
    <citation type="submission" date="2007-10" db="EMBL/GenBank/DDBJ databases">
        <title>Complete sequence of chromosome of Desulforudis audaxviator MP104C.</title>
        <authorList>
            <person name="Copeland A."/>
            <person name="Lucas S."/>
            <person name="Lapidus A."/>
            <person name="Barry K."/>
            <person name="Glavina del Rio T."/>
            <person name="Dalin E."/>
            <person name="Tice H."/>
            <person name="Bruce D."/>
            <person name="Pitluck S."/>
            <person name="Lowry S.R."/>
            <person name="Larimer F."/>
            <person name="Land M.L."/>
            <person name="Hauser L."/>
            <person name="Kyrpides N."/>
            <person name="Ivanova N.N."/>
            <person name="Richardson P."/>
        </authorList>
    </citation>
    <scope>NUCLEOTIDE SEQUENCE [LARGE SCALE GENOMIC DNA]</scope>
    <source>
        <strain>MP104C</strain>
    </source>
</reference>
<keyword id="KW-0067">ATP-binding</keyword>
<keyword id="KW-0143">Chaperone</keyword>
<keyword id="KW-0963">Cytoplasm</keyword>
<keyword id="KW-0413">Isomerase</keyword>
<keyword id="KW-0547">Nucleotide-binding</keyword>
<keyword id="KW-1185">Reference proteome</keyword>
<organism>
    <name type="scientific">Desulforudis audaxviator (strain MP104C)</name>
    <dbReference type="NCBI Taxonomy" id="477974"/>
    <lineage>
        <taxon>Bacteria</taxon>
        <taxon>Bacillati</taxon>
        <taxon>Bacillota</taxon>
        <taxon>Clostridia</taxon>
        <taxon>Thermoanaerobacterales</taxon>
        <taxon>Candidatus Desulforudaceae</taxon>
        <taxon>Candidatus Desulforudis</taxon>
    </lineage>
</organism>
<evidence type="ECO:0000255" key="1">
    <source>
        <dbReference type="HAMAP-Rule" id="MF_00600"/>
    </source>
</evidence>
<protein>
    <recommendedName>
        <fullName evidence="1">Chaperonin GroEL</fullName>
        <ecNumber evidence="1">5.6.1.7</ecNumber>
    </recommendedName>
    <alternativeName>
        <fullName evidence="1">60 kDa chaperonin</fullName>
    </alternativeName>
    <alternativeName>
        <fullName evidence="1">Chaperonin-60</fullName>
        <shortName evidence="1">Cpn60</shortName>
    </alternativeName>
</protein>